<evidence type="ECO:0000255" key="1">
    <source>
        <dbReference type="HAMAP-Rule" id="MF_00127"/>
    </source>
</evidence>
<name>SYH_PORGI</name>
<keyword id="KW-0030">Aminoacyl-tRNA synthetase</keyword>
<keyword id="KW-0067">ATP-binding</keyword>
<keyword id="KW-0963">Cytoplasm</keyword>
<keyword id="KW-0436">Ligase</keyword>
<keyword id="KW-0547">Nucleotide-binding</keyword>
<keyword id="KW-0648">Protein biosynthesis</keyword>
<keyword id="KW-1185">Reference proteome</keyword>
<reference key="1">
    <citation type="journal article" date="2003" name="J. Bacteriol.">
        <title>Complete genome sequence of the oral pathogenic bacterium Porphyromonas gingivalis strain W83.</title>
        <authorList>
            <person name="Nelson K.E."/>
            <person name="Fleischmann R.D."/>
            <person name="DeBoy R.T."/>
            <person name="Paulsen I.T."/>
            <person name="Fouts D.E."/>
            <person name="Eisen J.A."/>
            <person name="Daugherty S.C."/>
            <person name="Dodson R.J."/>
            <person name="Durkin A.S."/>
            <person name="Gwinn M.L."/>
            <person name="Haft D.H."/>
            <person name="Kolonay J.F."/>
            <person name="Nelson W.C."/>
            <person name="Mason T.M."/>
            <person name="Tallon L."/>
            <person name="Gray J."/>
            <person name="Granger D."/>
            <person name="Tettelin H."/>
            <person name="Dong H."/>
            <person name="Galvin J.L."/>
            <person name="Duncan M.J."/>
            <person name="Dewhirst F.E."/>
            <person name="Fraser C.M."/>
        </authorList>
    </citation>
    <scope>NUCLEOTIDE SEQUENCE [LARGE SCALE GENOMIC DNA]</scope>
    <source>
        <strain>ATCC BAA-308 / W83</strain>
    </source>
</reference>
<sequence length="454" mass="51196">MQKPSIPKGMRDFSPVEMSRRNYIFDTIREVYELFGFNQIETPTMEMLSTLMGKYGEEGDRLLFKVLNSGDVLADFCAEELAEKNSLRFAAKACEKGLRYDLTVPFARYVVMHRNEINFPFKRYQIQPVWRADRPQKGRYREFYQCDGDVIGSDSLMNEVELIQIISEVFRRLGIRTRILLNNRKILSGIAEVVDEADRLTDITVAIDKLDKIGLDKVNDELRTKGFGEEAIERLRPFIEMKGDNREKLDRLKSALASSETGLKGIEELTYILDKVERVQLHSELMVDISLARGLSYYTGAILEVKALDAEMGSITGGGRYDNLTGIFGLEGMSGVGISFGADRIYDVMMQLDLFPAEKLTGTQLLFVNFSEEDADSLLPLIQKLREQGLRTELYPEPAKIKKQMSYANAANIPYVALVGENERAAGQVNLKNMLTGEQQMLPADAATIVAAIV</sequence>
<organism>
    <name type="scientific">Porphyromonas gingivalis (strain ATCC BAA-308 / W83)</name>
    <dbReference type="NCBI Taxonomy" id="242619"/>
    <lineage>
        <taxon>Bacteria</taxon>
        <taxon>Pseudomonadati</taxon>
        <taxon>Bacteroidota</taxon>
        <taxon>Bacteroidia</taxon>
        <taxon>Bacteroidales</taxon>
        <taxon>Porphyromonadaceae</taxon>
        <taxon>Porphyromonas</taxon>
    </lineage>
</organism>
<feature type="chain" id="PRO_0000136220" description="Histidine--tRNA ligase">
    <location>
        <begin position="1"/>
        <end position="454"/>
    </location>
</feature>
<comment type="catalytic activity">
    <reaction evidence="1">
        <text>tRNA(His) + L-histidine + ATP = L-histidyl-tRNA(His) + AMP + diphosphate + H(+)</text>
        <dbReference type="Rhea" id="RHEA:17313"/>
        <dbReference type="Rhea" id="RHEA-COMP:9665"/>
        <dbReference type="Rhea" id="RHEA-COMP:9689"/>
        <dbReference type="ChEBI" id="CHEBI:15378"/>
        <dbReference type="ChEBI" id="CHEBI:30616"/>
        <dbReference type="ChEBI" id="CHEBI:33019"/>
        <dbReference type="ChEBI" id="CHEBI:57595"/>
        <dbReference type="ChEBI" id="CHEBI:78442"/>
        <dbReference type="ChEBI" id="CHEBI:78527"/>
        <dbReference type="ChEBI" id="CHEBI:456215"/>
        <dbReference type="EC" id="6.1.1.21"/>
    </reaction>
</comment>
<comment type="subunit">
    <text evidence="1">Homodimer.</text>
</comment>
<comment type="subcellular location">
    <subcellularLocation>
        <location evidence="1">Cytoplasm</location>
    </subcellularLocation>
</comment>
<comment type="similarity">
    <text evidence="1">Belongs to the class-II aminoacyl-tRNA synthetase family.</text>
</comment>
<dbReference type="EC" id="6.1.1.21" evidence="1"/>
<dbReference type="EMBL" id="AE015924">
    <property type="protein sequence ID" value="AAQ67023.1"/>
    <property type="molecule type" value="Genomic_DNA"/>
</dbReference>
<dbReference type="RefSeq" id="WP_005874712.1">
    <property type="nucleotide sequence ID" value="NC_002950.2"/>
</dbReference>
<dbReference type="SMR" id="Q7MTB3"/>
<dbReference type="STRING" id="242619.PG_2062"/>
<dbReference type="EnsemblBacteria" id="AAQ67023">
    <property type="protein sequence ID" value="AAQ67023"/>
    <property type="gene ID" value="PG_2062"/>
</dbReference>
<dbReference type="KEGG" id="pgi:PG_2062"/>
<dbReference type="PATRIC" id="fig|242619.8.peg.1918"/>
<dbReference type="eggNOG" id="COG0124">
    <property type="taxonomic scope" value="Bacteria"/>
</dbReference>
<dbReference type="HOGENOM" id="CLU_025113_3_0_10"/>
<dbReference type="BioCyc" id="PGIN242619:G1G02-1933-MONOMER"/>
<dbReference type="Proteomes" id="UP000000588">
    <property type="component" value="Chromosome"/>
</dbReference>
<dbReference type="GO" id="GO:0005737">
    <property type="term" value="C:cytoplasm"/>
    <property type="evidence" value="ECO:0007669"/>
    <property type="project" value="UniProtKB-SubCell"/>
</dbReference>
<dbReference type="GO" id="GO:0005524">
    <property type="term" value="F:ATP binding"/>
    <property type="evidence" value="ECO:0007669"/>
    <property type="project" value="UniProtKB-UniRule"/>
</dbReference>
<dbReference type="GO" id="GO:0004821">
    <property type="term" value="F:histidine-tRNA ligase activity"/>
    <property type="evidence" value="ECO:0007669"/>
    <property type="project" value="UniProtKB-UniRule"/>
</dbReference>
<dbReference type="GO" id="GO:0006427">
    <property type="term" value="P:histidyl-tRNA aminoacylation"/>
    <property type="evidence" value="ECO:0007669"/>
    <property type="project" value="UniProtKB-UniRule"/>
</dbReference>
<dbReference type="CDD" id="cd00773">
    <property type="entry name" value="HisRS-like_core"/>
    <property type="match status" value="1"/>
</dbReference>
<dbReference type="CDD" id="cd00859">
    <property type="entry name" value="HisRS_anticodon"/>
    <property type="match status" value="1"/>
</dbReference>
<dbReference type="FunFam" id="3.30.930.10:FF:000093">
    <property type="entry name" value="Histidine--tRNA ligase"/>
    <property type="match status" value="1"/>
</dbReference>
<dbReference type="Gene3D" id="3.40.50.800">
    <property type="entry name" value="Anticodon-binding domain"/>
    <property type="match status" value="1"/>
</dbReference>
<dbReference type="Gene3D" id="3.30.930.10">
    <property type="entry name" value="Bira Bifunctional Protein, Domain 2"/>
    <property type="match status" value="1"/>
</dbReference>
<dbReference type="HAMAP" id="MF_00127">
    <property type="entry name" value="His_tRNA_synth"/>
    <property type="match status" value="1"/>
</dbReference>
<dbReference type="InterPro" id="IPR006195">
    <property type="entry name" value="aa-tRNA-synth_II"/>
</dbReference>
<dbReference type="InterPro" id="IPR045864">
    <property type="entry name" value="aa-tRNA-synth_II/BPL/LPL"/>
</dbReference>
<dbReference type="InterPro" id="IPR004154">
    <property type="entry name" value="Anticodon-bd"/>
</dbReference>
<dbReference type="InterPro" id="IPR036621">
    <property type="entry name" value="Anticodon-bd_dom_sf"/>
</dbReference>
<dbReference type="InterPro" id="IPR015807">
    <property type="entry name" value="His-tRNA-ligase"/>
</dbReference>
<dbReference type="InterPro" id="IPR041715">
    <property type="entry name" value="HisRS-like_core"/>
</dbReference>
<dbReference type="InterPro" id="IPR004516">
    <property type="entry name" value="HisRS/HisZ"/>
</dbReference>
<dbReference type="InterPro" id="IPR033656">
    <property type="entry name" value="HisRS_anticodon"/>
</dbReference>
<dbReference type="NCBIfam" id="TIGR00442">
    <property type="entry name" value="hisS"/>
    <property type="match status" value="1"/>
</dbReference>
<dbReference type="PANTHER" id="PTHR11476:SF7">
    <property type="entry name" value="HISTIDINE--TRNA LIGASE"/>
    <property type="match status" value="1"/>
</dbReference>
<dbReference type="PANTHER" id="PTHR11476">
    <property type="entry name" value="HISTIDYL-TRNA SYNTHETASE"/>
    <property type="match status" value="1"/>
</dbReference>
<dbReference type="Pfam" id="PF03129">
    <property type="entry name" value="HGTP_anticodon"/>
    <property type="match status" value="1"/>
</dbReference>
<dbReference type="Pfam" id="PF13393">
    <property type="entry name" value="tRNA-synt_His"/>
    <property type="match status" value="1"/>
</dbReference>
<dbReference type="PIRSF" id="PIRSF001549">
    <property type="entry name" value="His-tRNA_synth"/>
    <property type="match status" value="1"/>
</dbReference>
<dbReference type="SUPFAM" id="SSF52954">
    <property type="entry name" value="Class II aaRS ABD-related"/>
    <property type="match status" value="1"/>
</dbReference>
<dbReference type="SUPFAM" id="SSF55681">
    <property type="entry name" value="Class II aaRS and biotin synthetases"/>
    <property type="match status" value="1"/>
</dbReference>
<dbReference type="PROSITE" id="PS50862">
    <property type="entry name" value="AA_TRNA_LIGASE_II"/>
    <property type="match status" value="1"/>
</dbReference>
<accession>Q7MTB3</accession>
<proteinExistence type="inferred from homology"/>
<gene>
    <name evidence="1" type="primary">hisS</name>
    <name type="ordered locus">PG_2062</name>
</gene>
<protein>
    <recommendedName>
        <fullName evidence="1">Histidine--tRNA ligase</fullName>
        <ecNumber evidence="1">6.1.1.21</ecNumber>
    </recommendedName>
    <alternativeName>
        <fullName evidence="1">Histidyl-tRNA synthetase</fullName>
        <shortName evidence="1">HisRS</shortName>
    </alternativeName>
</protein>